<keyword id="KW-0002">3D-structure</keyword>
<keyword id="KW-0903">Direct protein sequencing</keyword>
<keyword id="KW-1015">Disulfide bond</keyword>
<keyword id="KW-0273">Eye lens protein</keyword>
<keyword id="KW-0971">Glycation</keyword>
<keyword id="KW-0325">Glycoprotein</keyword>
<keyword id="KW-1185">Reference proteome</keyword>
<keyword id="KW-0677">Repeat</keyword>
<proteinExistence type="evidence at protein level"/>
<sequence length="175" mass="21097">MGKITFYEDRGFQGHCYECSSDCPNLQPYFSRCNSIRVDSGCWMLYERPNYQGHQYFLRRGDYPDYQQWMGFNDSIRSCRLIPQHTGTFRMRIYERDDFRGQMSEITDDCPSLQDRFHLTEVHSLNVLEGSWVLYEMPSYRGRQYLLRPGEYRRYLDWGAMNAKVGSLRRVMDFY</sequence>
<feature type="initiator methionine" description="Removed" evidence="2 3">
    <location>
        <position position="1"/>
    </location>
</feature>
<feature type="chain" id="PRO_0000057581" description="Gamma-crystallin B">
    <location>
        <begin position="2"/>
        <end position="175"/>
    </location>
</feature>
<feature type="domain" description="Beta/gamma crystallin 'Greek key' 1" evidence="1">
    <location>
        <begin position="2"/>
        <end position="40"/>
    </location>
</feature>
<feature type="domain" description="Beta/gamma crystallin 'Greek key' 2" evidence="1">
    <location>
        <begin position="41"/>
        <end position="83"/>
    </location>
</feature>
<feature type="domain" description="Beta/gamma crystallin 'Greek key' 3" evidence="1">
    <location>
        <begin position="89"/>
        <end position="129"/>
    </location>
</feature>
<feature type="domain" description="Beta/gamma crystallin 'Greek key' 4" evidence="1">
    <location>
        <begin position="130"/>
        <end position="172"/>
    </location>
</feature>
<feature type="region of interest" description="Connecting peptide">
    <location>
        <begin position="84"/>
        <end position="88"/>
    </location>
</feature>
<feature type="glycosylation site" description="N-linked (Glc) (glycation) lysine; in vitro" evidence="4">
    <location>
        <position position="3"/>
    </location>
</feature>
<feature type="disulfide bond" evidence="3">
    <location>
        <begin position="19"/>
        <end position="23"/>
    </location>
</feature>
<feature type="sequence conflict" description="In Ref. 2; CAA25518." evidence="5" ref="2">
    <original>T</original>
    <variation>S</variation>
    <location>
        <position position="120"/>
    </location>
</feature>
<feature type="strand" evidence="6">
    <location>
        <begin position="3"/>
        <end position="9"/>
    </location>
</feature>
<feature type="helix" evidence="6">
    <location>
        <begin position="10"/>
        <end position="12"/>
    </location>
</feature>
<feature type="strand" evidence="6">
    <location>
        <begin position="13"/>
        <end position="19"/>
    </location>
</feature>
<feature type="turn" evidence="6">
    <location>
        <begin position="27"/>
        <end position="29"/>
    </location>
</feature>
<feature type="helix" evidence="7">
    <location>
        <begin position="30"/>
        <end position="33"/>
    </location>
</feature>
<feature type="strand" evidence="6">
    <location>
        <begin position="34"/>
        <end position="41"/>
    </location>
</feature>
<feature type="strand" evidence="6">
    <location>
        <begin position="43"/>
        <end position="48"/>
    </location>
</feature>
<feature type="turn" evidence="6">
    <location>
        <begin position="49"/>
        <end position="51"/>
    </location>
</feature>
<feature type="strand" evidence="6">
    <location>
        <begin position="52"/>
        <end position="58"/>
    </location>
</feature>
<feature type="strand" evidence="6">
    <location>
        <begin position="60"/>
        <end position="65"/>
    </location>
</feature>
<feature type="helix" evidence="6">
    <location>
        <begin position="66"/>
        <end position="69"/>
    </location>
</feature>
<feature type="strand" evidence="6">
    <location>
        <begin position="72"/>
        <end position="74"/>
    </location>
</feature>
<feature type="strand" evidence="6">
    <location>
        <begin position="78"/>
        <end position="81"/>
    </location>
</feature>
<feature type="strand" evidence="6">
    <location>
        <begin position="90"/>
        <end position="96"/>
    </location>
</feature>
<feature type="turn" evidence="6">
    <location>
        <begin position="97"/>
        <end position="99"/>
    </location>
</feature>
<feature type="strand" evidence="6">
    <location>
        <begin position="100"/>
        <end position="106"/>
    </location>
</feature>
<feature type="helix" evidence="6">
    <location>
        <begin position="113"/>
        <end position="117"/>
    </location>
</feature>
<feature type="strand" evidence="6">
    <location>
        <begin position="124"/>
        <end position="130"/>
    </location>
</feature>
<feature type="strand" evidence="6">
    <location>
        <begin position="132"/>
        <end position="137"/>
    </location>
</feature>
<feature type="turn" evidence="6">
    <location>
        <begin position="138"/>
        <end position="140"/>
    </location>
</feature>
<feature type="strand" evidence="6">
    <location>
        <begin position="141"/>
        <end position="147"/>
    </location>
</feature>
<feature type="strand" evidence="6">
    <location>
        <begin position="149"/>
        <end position="152"/>
    </location>
</feature>
<feature type="helix" evidence="6">
    <location>
        <begin position="155"/>
        <end position="158"/>
    </location>
</feature>
<feature type="strand" evidence="6">
    <location>
        <begin position="167"/>
        <end position="170"/>
    </location>
</feature>
<gene>
    <name type="primary">CRYGB</name>
</gene>
<protein>
    <recommendedName>
        <fullName>Gamma-crystallin B</fullName>
    </recommendedName>
    <alternativeName>
        <fullName>Gamma-B-crystallin</fullName>
    </alternativeName>
    <alternativeName>
        <fullName>Gamma-crystallin II</fullName>
    </alternativeName>
</protein>
<organism>
    <name type="scientific">Bos taurus</name>
    <name type="common">Bovine</name>
    <dbReference type="NCBI Taxonomy" id="9913"/>
    <lineage>
        <taxon>Eukaryota</taxon>
        <taxon>Metazoa</taxon>
        <taxon>Chordata</taxon>
        <taxon>Craniata</taxon>
        <taxon>Vertebrata</taxon>
        <taxon>Euteleostomi</taxon>
        <taxon>Mammalia</taxon>
        <taxon>Eutheria</taxon>
        <taxon>Laurasiatheria</taxon>
        <taxon>Artiodactyla</taxon>
        <taxon>Ruminantia</taxon>
        <taxon>Pecora</taxon>
        <taxon>Bovidae</taxon>
        <taxon>Bovinae</taxon>
        <taxon>Bos</taxon>
    </lineage>
</organism>
<dbReference type="EMBL" id="X01036">
    <property type="protein sequence ID" value="CAA25518.1"/>
    <property type="molecule type" value="mRNA"/>
</dbReference>
<dbReference type="EMBL" id="M16894">
    <property type="protein sequence ID" value="AAA30476.1"/>
    <property type="molecule type" value="mRNA"/>
</dbReference>
<dbReference type="EMBL" id="EF208024">
    <property type="protein sequence ID" value="ABM97504.1"/>
    <property type="molecule type" value="mRNA"/>
</dbReference>
<dbReference type="PIR" id="A29655">
    <property type="entry name" value="CYBOG"/>
</dbReference>
<dbReference type="RefSeq" id="NP_001013612.1">
    <property type="nucleotide sequence ID" value="NM_001013594.1"/>
</dbReference>
<dbReference type="PDB" id="1AMM">
    <property type="method" value="X-ray"/>
    <property type="resolution" value="1.20 A"/>
    <property type="chains" value="A=2-175"/>
</dbReference>
<dbReference type="PDB" id="1DSL">
    <property type="method" value="X-ray"/>
    <property type="resolution" value="1.55 A"/>
    <property type="chains" value="A=88-175"/>
</dbReference>
<dbReference type="PDB" id="1GAM">
    <property type="method" value="X-ray"/>
    <property type="resolution" value="2.60 A"/>
    <property type="chains" value="A/B=88-173"/>
</dbReference>
<dbReference type="PDB" id="1GCS">
    <property type="method" value="X-ray"/>
    <property type="resolution" value="2.00 A"/>
    <property type="chains" value="A=2-175"/>
</dbReference>
<dbReference type="PDB" id="1I5I">
    <property type="method" value="X-ray"/>
    <property type="resolution" value="2.40 A"/>
    <property type="chains" value="A=2-175"/>
</dbReference>
<dbReference type="PDB" id="4GCR">
    <property type="method" value="X-ray"/>
    <property type="resolution" value="1.47 A"/>
    <property type="chains" value="A=2-175"/>
</dbReference>
<dbReference type="PDB" id="4W9A">
    <property type="method" value="X-ray"/>
    <property type="resolution" value="1.38 A"/>
    <property type="chains" value="A=1-175"/>
</dbReference>
<dbReference type="PDB" id="4W9B">
    <property type="method" value="X-ray"/>
    <property type="resolution" value="1.28 A"/>
    <property type="chains" value="A=1-175"/>
</dbReference>
<dbReference type="PDB" id="6QDW">
    <property type="method" value="EM"/>
    <property type="resolution" value="2.83 A"/>
    <property type="chains" value="z=1-38"/>
</dbReference>
<dbReference type="PDB" id="6YS3">
    <property type="method" value="EM"/>
    <property type="resolution" value="2.58 A"/>
    <property type="chains" value="z=1-38"/>
</dbReference>
<dbReference type="PDBsum" id="1AMM"/>
<dbReference type="PDBsum" id="1DSL"/>
<dbReference type="PDBsum" id="1GAM"/>
<dbReference type="PDBsum" id="1GCS"/>
<dbReference type="PDBsum" id="1I5I"/>
<dbReference type="PDBsum" id="4GCR"/>
<dbReference type="PDBsum" id="4W9A"/>
<dbReference type="PDBsum" id="4W9B"/>
<dbReference type="PDBsum" id="6QDW"/>
<dbReference type="PDBsum" id="6YS3"/>
<dbReference type="EMDB" id="EMD-10891"/>
<dbReference type="EMDB" id="EMD-4531"/>
<dbReference type="PCDDB" id="P02526"/>
<dbReference type="SMR" id="P02526"/>
<dbReference type="FunCoup" id="P02526">
    <property type="interactions" value="56"/>
</dbReference>
<dbReference type="STRING" id="9913.ENSBTAP00000009553"/>
<dbReference type="GlyCosmos" id="P02526">
    <property type="glycosylation" value="1 site, No reported glycans"/>
</dbReference>
<dbReference type="PaxDb" id="9913-ENSBTAP00000009553"/>
<dbReference type="Ensembl" id="ENSBTAT00000009553.5">
    <property type="protein sequence ID" value="ENSBTAP00000009553.3"/>
    <property type="gene ID" value="ENSBTAG00000021770.5"/>
</dbReference>
<dbReference type="GeneID" id="281720"/>
<dbReference type="KEGG" id="bta:281720"/>
<dbReference type="CTD" id="1419"/>
<dbReference type="VEuPathDB" id="HostDB:ENSBTAG00000021770"/>
<dbReference type="VGNC" id="VGNC:55341">
    <property type="gene designation" value="CRYGB"/>
</dbReference>
<dbReference type="eggNOG" id="ENOG502RXJY">
    <property type="taxonomic scope" value="Eukaryota"/>
</dbReference>
<dbReference type="GeneTree" id="ENSGT00940000156190"/>
<dbReference type="HOGENOM" id="CLU_081883_1_1_1"/>
<dbReference type="InParanoid" id="P02526"/>
<dbReference type="OMA" id="IHSLNVM"/>
<dbReference type="OrthoDB" id="8407241at2759"/>
<dbReference type="EvolutionaryTrace" id="P02526"/>
<dbReference type="Proteomes" id="UP000009136">
    <property type="component" value="Chromosome 2"/>
</dbReference>
<dbReference type="Bgee" id="ENSBTAG00000021770">
    <property type="expression patterns" value="Expressed in floor plate of diencephalon and 9 other cell types or tissues"/>
</dbReference>
<dbReference type="GO" id="GO:0005212">
    <property type="term" value="F:structural constituent of eye lens"/>
    <property type="evidence" value="ECO:0000318"/>
    <property type="project" value="GO_Central"/>
</dbReference>
<dbReference type="GO" id="GO:0002088">
    <property type="term" value="P:lens development in camera-type eye"/>
    <property type="evidence" value="ECO:0000318"/>
    <property type="project" value="GO_Central"/>
</dbReference>
<dbReference type="GO" id="GO:0007601">
    <property type="term" value="P:visual perception"/>
    <property type="evidence" value="ECO:0000318"/>
    <property type="project" value="GO_Central"/>
</dbReference>
<dbReference type="FunFam" id="2.60.20.10:FF:000001">
    <property type="entry name" value="Crystallin gamma S"/>
    <property type="match status" value="1"/>
</dbReference>
<dbReference type="FunFam" id="2.60.20.10:FF:000003">
    <property type="entry name" value="Crystallin gamma S"/>
    <property type="match status" value="1"/>
</dbReference>
<dbReference type="Gene3D" id="2.60.20.10">
    <property type="entry name" value="Crystallins"/>
    <property type="match status" value="2"/>
</dbReference>
<dbReference type="InterPro" id="IPR050252">
    <property type="entry name" value="Beta/Gamma-Crystallin"/>
</dbReference>
<dbReference type="InterPro" id="IPR001064">
    <property type="entry name" value="Beta/gamma_crystallin"/>
</dbReference>
<dbReference type="InterPro" id="IPR011024">
    <property type="entry name" value="G_crystallin-like"/>
</dbReference>
<dbReference type="PANTHER" id="PTHR11818">
    <property type="entry name" value="BETA/GAMMA CRYSTALLIN"/>
    <property type="match status" value="1"/>
</dbReference>
<dbReference type="PANTHER" id="PTHR11818:SF101">
    <property type="entry name" value="GAMMA-CRYSTALLIN B"/>
    <property type="match status" value="1"/>
</dbReference>
<dbReference type="Pfam" id="PF00030">
    <property type="entry name" value="Crystall"/>
    <property type="match status" value="2"/>
</dbReference>
<dbReference type="PRINTS" id="PR01367">
    <property type="entry name" value="BGCRYSTALLIN"/>
</dbReference>
<dbReference type="SMART" id="SM00247">
    <property type="entry name" value="XTALbg"/>
    <property type="match status" value="2"/>
</dbReference>
<dbReference type="SUPFAM" id="SSF49695">
    <property type="entry name" value="gamma-Crystallin-like"/>
    <property type="match status" value="1"/>
</dbReference>
<dbReference type="PROSITE" id="PS50915">
    <property type="entry name" value="CRYSTALLIN_BETA_GAMMA"/>
    <property type="match status" value="4"/>
</dbReference>
<name>CRGB_BOVIN</name>
<reference key="1">
    <citation type="journal article" date="1987" name="Biochem. Biophys. Res. Commun.">
        <title>cDNA clones encoding bovine gamma-crystallins.</title>
        <authorList>
            <person name="Hay R.E."/>
            <person name="Woods W.D."/>
            <person name="Church R.L."/>
            <person name="Petrash J.M."/>
        </authorList>
    </citation>
    <scope>NUCLEOTIDE SEQUENCE [MRNA]</scope>
</reference>
<reference key="2">
    <citation type="journal article" date="1984" name="DNA">
        <title>Complete nucleotide sequence of a cDNA derived from calf lens gamma-crystallin mRNA: presence of Alu I-like DNA sequences.</title>
        <authorList>
            <person name="Bhat S.P."/>
            <person name="Spector A."/>
        </authorList>
    </citation>
    <scope>NUCLEOTIDE SEQUENCE [MRNA]</scope>
    <source>
        <tissue>Lens</tissue>
    </source>
</reference>
<reference key="3">
    <citation type="submission" date="2007-01" db="EMBL/GenBank/DDBJ databases">
        <authorList>
            <person name="Wistow G."/>
        </authorList>
    </citation>
    <scope>NUCLEOTIDE SEQUENCE [MRNA]</scope>
    <source>
        <tissue>Lens</tissue>
    </source>
</reference>
<reference key="4">
    <citation type="journal article" date="1988" name="J. Protein Chem.">
        <title>Physicochemical characterization of gamma-crystallins from bovine lens -- hydrodynamic and biochemical properties.</title>
        <authorList>
            <person name="Chiou S.H."/>
            <person name="Azari P."/>
            <person name="Himmel M.E."/>
        </authorList>
    </citation>
    <scope>PROTEIN SEQUENCE OF 2-26</scope>
</reference>
<reference key="5">
    <citation type="journal article" date="1988" name="Arch. Biochem. Biophys.">
        <title>The disulfide content of calf gamma-crystallin.</title>
        <authorList>
            <person name="McDermott M.J."/>
            <person name="Gawinowicz-Kolks M.A."/>
            <person name="Chiesa R."/>
            <person name="Spector A."/>
        </authorList>
    </citation>
    <scope>PROTEIN SEQUENCE OF 2-26</scope>
    <scope>DISULFIDE BOND</scope>
</reference>
<reference key="6">
    <citation type="journal article" date="1996" name="Anal. Biochem.">
        <title>Identification of the glycation site of lens gamma B-crystallin by fast atom bombardment tandem mass spectrometry.</title>
        <authorList>
            <person name="Smith J.B."/>
            <person name="Hanson S.R."/>
            <person name="Cerny R.L."/>
            <person name="Zhao H.R."/>
            <person name="Abraham E.C."/>
        </authorList>
    </citation>
    <scope>GLYCATION AT LYS-3</scope>
    <scope>IDENTIFICATION BY MASS SPECTROMETRY</scope>
</reference>
<reference key="7">
    <citation type="journal article" date="1981" name="Nature">
        <title>The molecular structure and stability of the eye lens: X-ray analysis of gamma-crystallin II.</title>
        <authorList>
            <person name="Blundell T.L."/>
            <person name="Lindley P."/>
            <person name="Miller L."/>
            <person name="Moss D."/>
            <person name="Slingsby C."/>
            <person name="Tickle I."/>
            <person name="Turnell B."/>
            <person name="Wistow G."/>
        </authorList>
    </citation>
    <scope>X-RAY CRYSTALLOGRAPHY (2.6 ANGSTROMS)</scope>
    <scope>SEQUENCE REVISION</scope>
</reference>
<reference key="8">
    <citation type="journal article" date="1983" name="J. Mol. Biol.">
        <title>X-ray analysis of the eye lens protein gamma-II crystallin at 1.9-A resolution.</title>
        <authorList>
            <person name="Wistow G."/>
            <person name="Turnell B."/>
            <person name="Summers L."/>
            <person name="Slingsby C."/>
            <person name="Moss D."/>
            <person name="Miller L."/>
            <person name="Lindley P."/>
            <person name="Blundell T.L."/>
        </authorList>
    </citation>
    <scope>X-RAY CRYSTALLOGRAPHY (1.9 ANGSTROMS)</scope>
</reference>
<reference key="9">
    <citation type="journal article" date="1993" name="Acta Crystallogr. D">
        <title>Structure of the bovine eye lens protein gammaB (gammaII)-crystallin at 1.47 A.</title>
        <authorList>
            <person name="Najmudin S."/>
            <person name="Nalini V."/>
            <person name="Dreissen H.P.C."/>
            <person name="Slingsby C."/>
            <person name="Blundell T.L."/>
            <person name="Moss D.S."/>
            <person name="Lindley P.F."/>
        </authorList>
    </citation>
    <scope>X-RAY CRYSTALLOGRAPHY (1.47 ANGSTROMS)</scope>
</reference>
<reference key="10">
    <citation type="journal article" date="1996" name="Acta Crystallogr. D">
        <title>An eye lens protein-water structure: 1.2-A resolution structure of gammaB-crystallin at 150 K.</title>
        <authorList>
            <person name="Kumaraswamy V.S."/>
            <person name="Lindley P.F."/>
            <person name="Slingsby C."/>
            <person name="Glover I.D."/>
        </authorList>
    </citation>
    <scope>X-RAY CRYSTALLOGRAPHY (1.2 ANGSTROMS)</scope>
</reference>
<reference key="11">
    <citation type="journal article" date="1998" name="Protein Sci.">
        <title>X-ray structures of three interface mutants of gammaB-crystallin from bovine eye lens.</title>
        <authorList>
            <person name="Palme S."/>
            <person name="Jaenicke R."/>
            <person name="Slingsby C."/>
        </authorList>
    </citation>
    <scope>X-RAY CRYSTALLOGRAPHY (1.85 ANGSTROMS)</scope>
</reference>
<reference key="12">
    <citation type="journal article" date="1998" name="J. Mol. Biol.">
        <title>Unusual domain pairing in a mutant of bovine lens gammaB-crystallin.</title>
        <authorList>
            <person name="Palme S."/>
            <person name="Jaenicke R."/>
            <person name="Slingsby C."/>
        </authorList>
    </citation>
    <scope>X-RAY CRYSTALLOGRAPHY (2.2 ANGSTROMS) OF MUTANT ALA-57</scope>
</reference>
<accession>P02526</accession>
<accession>A2TJU8</accession>
<evidence type="ECO:0000255" key="1">
    <source>
        <dbReference type="PROSITE-ProRule" id="PRU00028"/>
    </source>
</evidence>
<evidence type="ECO:0000269" key="2">
    <source>
    </source>
</evidence>
<evidence type="ECO:0000269" key="3">
    <source>
    </source>
</evidence>
<evidence type="ECO:0000269" key="4">
    <source>
    </source>
</evidence>
<evidence type="ECO:0000305" key="5"/>
<evidence type="ECO:0007829" key="6">
    <source>
        <dbReference type="PDB" id="1AMM"/>
    </source>
</evidence>
<evidence type="ECO:0007829" key="7">
    <source>
        <dbReference type="PDB" id="6YS3"/>
    </source>
</evidence>
<comment type="function">
    <text>Crystallins are the dominant structural components of the vertebrate eye lens.</text>
</comment>
<comment type="domain">
    <text>Has a two-domain beta-structure, folded into four very similar Greek key motifs.</text>
</comment>
<comment type="similarity">
    <text evidence="5">Belongs to the beta/gamma-crystallin family.</text>
</comment>